<name>GATC_STRPQ</name>
<dbReference type="EC" id="6.3.5.-" evidence="1"/>
<dbReference type="EMBL" id="BA000034">
    <property type="protein sequence ID" value="BAC63420.1"/>
    <property type="status" value="ALT_INIT"/>
    <property type="molecule type" value="Genomic_DNA"/>
</dbReference>
<dbReference type="RefSeq" id="WP_002988561.1">
    <property type="nucleotide sequence ID" value="NC_004606.1"/>
</dbReference>
<dbReference type="SMR" id="P0DB29"/>
<dbReference type="GeneID" id="83690022"/>
<dbReference type="KEGG" id="sps:SPs0325"/>
<dbReference type="HOGENOM" id="CLU_105899_1_2_9"/>
<dbReference type="GO" id="GO:0050566">
    <property type="term" value="F:asparaginyl-tRNA synthase (glutamine-hydrolyzing) activity"/>
    <property type="evidence" value="ECO:0007669"/>
    <property type="project" value="RHEA"/>
</dbReference>
<dbReference type="GO" id="GO:0005524">
    <property type="term" value="F:ATP binding"/>
    <property type="evidence" value="ECO:0007669"/>
    <property type="project" value="UniProtKB-KW"/>
</dbReference>
<dbReference type="GO" id="GO:0050567">
    <property type="term" value="F:glutaminyl-tRNA synthase (glutamine-hydrolyzing) activity"/>
    <property type="evidence" value="ECO:0007669"/>
    <property type="project" value="UniProtKB-UniRule"/>
</dbReference>
<dbReference type="GO" id="GO:0070681">
    <property type="term" value="P:glutaminyl-tRNAGln biosynthesis via transamidation"/>
    <property type="evidence" value="ECO:0007669"/>
    <property type="project" value="TreeGrafter"/>
</dbReference>
<dbReference type="GO" id="GO:0006450">
    <property type="term" value="P:regulation of translational fidelity"/>
    <property type="evidence" value="ECO:0007669"/>
    <property type="project" value="InterPro"/>
</dbReference>
<dbReference type="GO" id="GO:0006412">
    <property type="term" value="P:translation"/>
    <property type="evidence" value="ECO:0007669"/>
    <property type="project" value="UniProtKB-UniRule"/>
</dbReference>
<dbReference type="Gene3D" id="1.10.20.60">
    <property type="entry name" value="Glu-tRNAGln amidotransferase C subunit, N-terminal domain"/>
    <property type="match status" value="1"/>
</dbReference>
<dbReference type="HAMAP" id="MF_00122">
    <property type="entry name" value="GatC"/>
    <property type="match status" value="1"/>
</dbReference>
<dbReference type="InterPro" id="IPR036113">
    <property type="entry name" value="Asp/Glu-ADT_sf_sub_c"/>
</dbReference>
<dbReference type="InterPro" id="IPR003837">
    <property type="entry name" value="GatC"/>
</dbReference>
<dbReference type="NCBIfam" id="TIGR00135">
    <property type="entry name" value="gatC"/>
    <property type="match status" value="1"/>
</dbReference>
<dbReference type="PANTHER" id="PTHR15004">
    <property type="entry name" value="GLUTAMYL-TRNA(GLN) AMIDOTRANSFERASE SUBUNIT C, MITOCHONDRIAL"/>
    <property type="match status" value="1"/>
</dbReference>
<dbReference type="PANTHER" id="PTHR15004:SF0">
    <property type="entry name" value="GLUTAMYL-TRNA(GLN) AMIDOTRANSFERASE SUBUNIT C, MITOCHONDRIAL"/>
    <property type="match status" value="1"/>
</dbReference>
<dbReference type="Pfam" id="PF02686">
    <property type="entry name" value="GatC"/>
    <property type="match status" value="1"/>
</dbReference>
<dbReference type="SUPFAM" id="SSF141000">
    <property type="entry name" value="Glu-tRNAGln amidotransferase C subunit"/>
    <property type="match status" value="1"/>
</dbReference>
<protein>
    <recommendedName>
        <fullName>Glutamyl-tRNA(Gln) amidotransferase subunit C</fullName>
        <shortName>Glu-ADT subunit C</shortName>
        <ecNumber evidence="1">6.3.5.-</ecNumber>
    </recommendedName>
</protein>
<proteinExistence type="inferred from homology"/>
<accession>P0DB29</accession>
<accession>P68891</accession>
<accession>P82582</accession>
<accession>Q99YB9</accession>
<organism>
    <name type="scientific">Streptococcus pyogenes serotype M3 (strain SSI-1)</name>
    <dbReference type="NCBI Taxonomy" id="193567"/>
    <lineage>
        <taxon>Bacteria</taxon>
        <taxon>Bacillati</taxon>
        <taxon>Bacillota</taxon>
        <taxon>Bacilli</taxon>
        <taxon>Lactobacillales</taxon>
        <taxon>Streptococcaceae</taxon>
        <taxon>Streptococcus</taxon>
    </lineage>
</organism>
<reference key="1">
    <citation type="journal article" date="2003" name="Genome Res.">
        <title>Genome sequence of an M3 strain of Streptococcus pyogenes reveals a large-scale genomic rearrangement in invasive strains and new insights into phage evolution.</title>
        <authorList>
            <person name="Nakagawa I."/>
            <person name="Kurokawa K."/>
            <person name="Yamashita A."/>
            <person name="Nakata M."/>
            <person name="Tomiyasu Y."/>
            <person name="Okahashi N."/>
            <person name="Kawabata S."/>
            <person name="Yamazaki K."/>
            <person name="Shiba T."/>
            <person name="Yasunaga T."/>
            <person name="Hayashi H."/>
            <person name="Hattori M."/>
            <person name="Hamada S."/>
        </authorList>
    </citation>
    <scope>NUCLEOTIDE SEQUENCE [LARGE SCALE GENOMIC DNA]</scope>
    <source>
        <strain>SSI-1</strain>
    </source>
</reference>
<comment type="function">
    <text evidence="1">Allows the formation of correctly charged Asn-tRNA(Asn) or Gln-tRNA(Gln) through the transamidation of misacylated Asp-tRNA(Asn) or Glu-tRNA(Gln) in organisms which lack either or both of asparaginyl-tRNA or glutaminyl-tRNA synthetases. The reaction takes place in the presence of glutamine and ATP through an activated phospho-Asp-tRNA(Asn) or phospho-Glu-tRNA(Gln).</text>
</comment>
<comment type="catalytic activity">
    <reaction evidence="1">
        <text>L-glutamyl-tRNA(Gln) + L-glutamine + ATP + H2O = L-glutaminyl-tRNA(Gln) + L-glutamate + ADP + phosphate + H(+)</text>
        <dbReference type="Rhea" id="RHEA:17521"/>
        <dbReference type="Rhea" id="RHEA-COMP:9681"/>
        <dbReference type="Rhea" id="RHEA-COMP:9684"/>
        <dbReference type="ChEBI" id="CHEBI:15377"/>
        <dbReference type="ChEBI" id="CHEBI:15378"/>
        <dbReference type="ChEBI" id="CHEBI:29985"/>
        <dbReference type="ChEBI" id="CHEBI:30616"/>
        <dbReference type="ChEBI" id="CHEBI:43474"/>
        <dbReference type="ChEBI" id="CHEBI:58359"/>
        <dbReference type="ChEBI" id="CHEBI:78520"/>
        <dbReference type="ChEBI" id="CHEBI:78521"/>
        <dbReference type="ChEBI" id="CHEBI:456216"/>
    </reaction>
</comment>
<comment type="catalytic activity">
    <reaction evidence="1">
        <text>L-aspartyl-tRNA(Asn) + L-glutamine + ATP + H2O = L-asparaginyl-tRNA(Asn) + L-glutamate + ADP + phosphate + 2 H(+)</text>
        <dbReference type="Rhea" id="RHEA:14513"/>
        <dbReference type="Rhea" id="RHEA-COMP:9674"/>
        <dbReference type="Rhea" id="RHEA-COMP:9677"/>
        <dbReference type="ChEBI" id="CHEBI:15377"/>
        <dbReference type="ChEBI" id="CHEBI:15378"/>
        <dbReference type="ChEBI" id="CHEBI:29985"/>
        <dbReference type="ChEBI" id="CHEBI:30616"/>
        <dbReference type="ChEBI" id="CHEBI:43474"/>
        <dbReference type="ChEBI" id="CHEBI:58359"/>
        <dbReference type="ChEBI" id="CHEBI:78515"/>
        <dbReference type="ChEBI" id="CHEBI:78516"/>
        <dbReference type="ChEBI" id="CHEBI:456216"/>
    </reaction>
</comment>
<comment type="subunit">
    <text evidence="1">Heterotrimer of A, B and C subunits.</text>
</comment>
<comment type="similarity">
    <text evidence="1">Belongs to the GatC family.</text>
</comment>
<comment type="sequence caution" evidence="2">
    <conflict type="erroneous initiation">
        <sequence resource="EMBL-CDS" id="BAC63420"/>
    </conflict>
</comment>
<sequence>MKISEEEVRHVAKLSKLSFSESETTTFATTLSKIVDMVELLNEVDTEGVAITTTMADKKNVMRQDVAEEGTDRALLFKNVPEKENHFIKVPAILDDGGDA</sequence>
<keyword id="KW-0067">ATP-binding</keyword>
<keyword id="KW-0436">Ligase</keyword>
<keyword id="KW-0547">Nucleotide-binding</keyword>
<keyword id="KW-0648">Protein biosynthesis</keyword>
<gene>
    <name evidence="1" type="primary">gatC</name>
    <name type="ordered locus">SPs0325</name>
</gene>
<evidence type="ECO:0000255" key="1">
    <source>
        <dbReference type="HAMAP-Rule" id="MF_00122"/>
    </source>
</evidence>
<evidence type="ECO:0000305" key="2"/>
<feature type="chain" id="PRO_0000411352" description="Glutamyl-tRNA(Gln) amidotransferase subunit C">
    <location>
        <begin position="1"/>
        <end position="100"/>
    </location>
</feature>